<accession>A6U1Z4</accession>
<gene>
    <name evidence="1" type="primary">xseB</name>
    <name type="ordered locus">SaurJH1_1614</name>
</gene>
<organism>
    <name type="scientific">Staphylococcus aureus (strain JH1)</name>
    <dbReference type="NCBI Taxonomy" id="359787"/>
    <lineage>
        <taxon>Bacteria</taxon>
        <taxon>Bacillati</taxon>
        <taxon>Bacillota</taxon>
        <taxon>Bacilli</taxon>
        <taxon>Bacillales</taxon>
        <taxon>Staphylococcaceae</taxon>
        <taxon>Staphylococcus</taxon>
    </lineage>
</organism>
<dbReference type="EC" id="3.1.11.6" evidence="1"/>
<dbReference type="EMBL" id="CP000736">
    <property type="protein sequence ID" value="ABR52462.1"/>
    <property type="molecule type" value="Genomic_DNA"/>
</dbReference>
<dbReference type="SMR" id="A6U1Z4"/>
<dbReference type="KEGG" id="sah:SaurJH1_1614"/>
<dbReference type="HOGENOM" id="CLU_145918_3_2_9"/>
<dbReference type="GO" id="GO:0005829">
    <property type="term" value="C:cytosol"/>
    <property type="evidence" value="ECO:0007669"/>
    <property type="project" value="TreeGrafter"/>
</dbReference>
<dbReference type="GO" id="GO:0009318">
    <property type="term" value="C:exodeoxyribonuclease VII complex"/>
    <property type="evidence" value="ECO:0007669"/>
    <property type="project" value="InterPro"/>
</dbReference>
<dbReference type="GO" id="GO:0008855">
    <property type="term" value="F:exodeoxyribonuclease VII activity"/>
    <property type="evidence" value="ECO:0007669"/>
    <property type="project" value="UniProtKB-UniRule"/>
</dbReference>
<dbReference type="GO" id="GO:0006308">
    <property type="term" value="P:DNA catabolic process"/>
    <property type="evidence" value="ECO:0007669"/>
    <property type="project" value="UniProtKB-UniRule"/>
</dbReference>
<dbReference type="FunFam" id="1.10.287.1040:FF:000006">
    <property type="entry name" value="Exodeoxyribonuclease 7 small subunit"/>
    <property type="match status" value="1"/>
</dbReference>
<dbReference type="Gene3D" id="1.10.287.1040">
    <property type="entry name" value="Exonuclease VII, small subunit"/>
    <property type="match status" value="1"/>
</dbReference>
<dbReference type="HAMAP" id="MF_00337">
    <property type="entry name" value="Exonuc_7_S"/>
    <property type="match status" value="1"/>
</dbReference>
<dbReference type="InterPro" id="IPR003761">
    <property type="entry name" value="Exonuc_VII_S"/>
</dbReference>
<dbReference type="InterPro" id="IPR037004">
    <property type="entry name" value="Exonuc_VII_ssu_sf"/>
</dbReference>
<dbReference type="NCBIfam" id="NF002140">
    <property type="entry name" value="PRK00977.1-4"/>
    <property type="match status" value="1"/>
</dbReference>
<dbReference type="NCBIfam" id="NF010671">
    <property type="entry name" value="PRK14068.1"/>
    <property type="match status" value="1"/>
</dbReference>
<dbReference type="NCBIfam" id="TIGR01280">
    <property type="entry name" value="xseB"/>
    <property type="match status" value="1"/>
</dbReference>
<dbReference type="PANTHER" id="PTHR34137">
    <property type="entry name" value="EXODEOXYRIBONUCLEASE 7 SMALL SUBUNIT"/>
    <property type="match status" value="1"/>
</dbReference>
<dbReference type="PANTHER" id="PTHR34137:SF1">
    <property type="entry name" value="EXODEOXYRIBONUCLEASE 7 SMALL SUBUNIT"/>
    <property type="match status" value="1"/>
</dbReference>
<dbReference type="Pfam" id="PF02609">
    <property type="entry name" value="Exonuc_VII_S"/>
    <property type="match status" value="1"/>
</dbReference>
<dbReference type="PIRSF" id="PIRSF006488">
    <property type="entry name" value="Exonuc_VII_S"/>
    <property type="match status" value="1"/>
</dbReference>
<dbReference type="SUPFAM" id="SSF116842">
    <property type="entry name" value="XseB-like"/>
    <property type="match status" value="1"/>
</dbReference>
<proteinExistence type="inferred from homology"/>
<sequence>MTKETQSFEEMMQELEQIVQKLDNETVSLEESLDLYQRGMKLSAACDTTLKNAEKKVNDLIKEEAEDVKNDESTDE</sequence>
<reference key="1">
    <citation type="submission" date="2007-06" db="EMBL/GenBank/DDBJ databases">
        <title>Complete sequence of chromosome of Staphylococcus aureus subsp. aureus JH1.</title>
        <authorList>
            <consortium name="US DOE Joint Genome Institute"/>
            <person name="Copeland A."/>
            <person name="Lucas S."/>
            <person name="Lapidus A."/>
            <person name="Barry K."/>
            <person name="Detter J.C."/>
            <person name="Glavina del Rio T."/>
            <person name="Hammon N."/>
            <person name="Israni S."/>
            <person name="Dalin E."/>
            <person name="Tice H."/>
            <person name="Pitluck S."/>
            <person name="Chain P."/>
            <person name="Malfatti S."/>
            <person name="Shin M."/>
            <person name="Vergez L."/>
            <person name="Schmutz J."/>
            <person name="Larimer F."/>
            <person name="Land M."/>
            <person name="Hauser L."/>
            <person name="Kyrpides N."/>
            <person name="Ivanova N."/>
            <person name="Tomasz A."/>
            <person name="Richardson P."/>
        </authorList>
    </citation>
    <scope>NUCLEOTIDE SEQUENCE [LARGE SCALE GENOMIC DNA]</scope>
    <source>
        <strain>JH1</strain>
    </source>
</reference>
<name>EX7S_STAA2</name>
<protein>
    <recommendedName>
        <fullName evidence="1">Exodeoxyribonuclease 7 small subunit</fullName>
        <ecNumber evidence="1">3.1.11.6</ecNumber>
    </recommendedName>
    <alternativeName>
        <fullName evidence="1">Exodeoxyribonuclease VII small subunit</fullName>
        <shortName evidence="1">Exonuclease VII small subunit</shortName>
    </alternativeName>
</protein>
<evidence type="ECO:0000255" key="1">
    <source>
        <dbReference type="HAMAP-Rule" id="MF_00337"/>
    </source>
</evidence>
<keyword id="KW-0963">Cytoplasm</keyword>
<keyword id="KW-0269">Exonuclease</keyword>
<keyword id="KW-0378">Hydrolase</keyword>
<keyword id="KW-0540">Nuclease</keyword>
<feature type="chain" id="PRO_1000079293" description="Exodeoxyribonuclease 7 small subunit">
    <location>
        <begin position="1"/>
        <end position="76"/>
    </location>
</feature>
<comment type="function">
    <text evidence="1">Bidirectionally degrades single-stranded DNA into large acid-insoluble oligonucleotides, which are then degraded further into small acid-soluble oligonucleotides.</text>
</comment>
<comment type="catalytic activity">
    <reaction evidence="1">
        <text>Exonucleolytic cleavage in either 5'- to 3'- or 3'- to 5'-direction to yield nucleoside 5'-phosphates.</text>
        <dbReference type="EC" id="3.1.11.6"/>
    </reaction>
</comment>
<comment type="subunit">
    <text evidence="1">Heterooligomer composed of large and small subunits.</text>
</comment>
<comment type="subcellular location">
    <subcellularLocation>
        <location evidence="1">Cytoplasm</location>
    </subcellularLocation>
</comment>
<comment type="similarity">
    <text evidence="1">Belongs to the XseB family.</text>
</comment>